<name>HSP1_PETCN</name>
<accession>Q9GLQ5</accession>
<organism>
    <name type="scientific">Petrogale concinna</name>
    <name type="common">Nabarlek</name>
    <name type="synonym">Peradorcas concinna</name>
    <dbReference type="NCBI Taxonomy" id="859894"/>
    <lineage>
        <taxon>Eukaryota</taxon>
        <taxon>Metazoa</taxon>
        <taxon>Chordata</taxon>
        <taxon>Craniata</taxon>
        <taxon>Vertebrata</taxon>
        <taxon>Euteleostomi</taxon>
        <taxon>Mammalia</taxon>
        <taxon>Metatheria</taxon>
        <taxon>Diprotodontia</taxon>
        <taxon>Macropodidae</taxon>
        <taxon>Petrogale</taxon>
    </lineage>
</organism>
<reference key="1">
    <citation type="journal article" date="2000" name="J. Mammal. Evol.">
        <title>Intergeneric relationships among Macropodoidea (Metatheria: Diprotodontia) and the chronicle of kangaroo evolution.</title>
        <authorList>
            <person name="Burk A."/>
            <person name="Springer M.S."/>
        </authorList>
    </citation>
    <scope>NUCLEOTIDE SEQUENCE [GENOMIC DNA]</scope>
</reference>
<dbReference type="EMBL" id="AF187538">
    <property type="protein sequence ID" value="AAG27955.1"/>
    <property type="molecule type" value="Genomic_DNA"/>
</dbReference>
<dbReference type="GO" id="GO:0000786">
    <property type="term" value="C:nucleosome"/>
    <property type="evidence" value="ECO:0007669"/>
    <property type="project" value="UniProtKB-KW"/>
</dbReference>
<dbReference type="GO" id="GO:0005634">
    <property type="term" value="C:nucleus"/>
    <property type="evidence" value="ECO:0007669"/>
    <property type="project" value="UniProtKB-SubCell"/>
</dbReference>
<dbReference type="GO" id="GO:0003677">
    <property type="term" value="F:DNA binding"/>
    <property type="evidence" value="ECO:0007669"/>
    <property type="project" value="UniProtKB-KW"/>
</dbReference>
<dbReference type="GO" id="GO:0030261">
    <property type="term" value="P:chromosome condensation"/>
    <property type="evidence" value="ECO:0007669"/>
    <property type="project" value="UniProtKB-KW"/>
</dbReference>
<dbReference type="GO" id="GO:0035092">
    <property type="term" value="P:sperm DNA condensation"/>
    <property type="evidence" value="ECO:0007669"/>
    <property type="project" value="InterPro"/>
</dbReference>
<dbReference type="InterPro" id="IPR000221">
    <property type="entry name" value="Protamine_P1"/>
</dbReference>
<dbReference type="PROSITE" id="PS00048">
    <property type="entry name" value="PROTAMINE_P1"/>
    <property type="match status" value="1"/>
</dbReference>
<proteinExistence type="evidence at transcript level"/>
<sequence>MARYRHSRSRSRSRYRRRRRRRSRYRSRRRRXRRRRRSRRGRRRRGYSRRRYSRRRRRRY</sequence>
<comment type="function">
    <text>Protamines substitute for histones in the chromatin of sperm during the haploid phase of spermatogenesis. They compact sperm DNA into a highly condensed, stable and inactive complex.</text>
</comment>
<comment type="subcellular location">
    <subcellularLocation>
        <location>Nucleus</location>
    </subcellularLocation>
    <subcellularLocation>
        <location>Chromosome</location>
    </subcellularLocation>
</comment>
<comment type="tissue specificity">
    <text>Testis.</text>
</comment>
<comment type="similarity">
    <text evidence="2">Belongs to the protamine P1 family.</text>
</comment>
<keyword id="KW-0158">Chromosome</keyword>
<keyword id="KW-0217">Developmental protein</keyword>
<keyword id="KW-0221">Differentiation</keyword>
<keyword id="KW-0226">DNA condensation</keyword>
<keyword id="KW-0238">DNA-binding</keyword>
<keyword id="KW-0544">Nucleosome core</keyword>
<keyword id="KW-0539">Nucleus</keyword>
<keyword id="KW-0744">Spermatogenesis</keyword>
<gene>
    <name type="primary">PRM1</name>
</gene>
<feature type="chain" id="PRO_0000191524" description="Sperm protamine P1">
    <location>
        <begin position="1"/>
        <end position="60"/>
    </location>
</feature>
<feature type="region of interest" description="Disordered" evidence="1">
    <location>
        <begin position="1"/>
        <end position="60"/>
    </location>
</feature>
<evidence type="ECO:0000256" key="1">
    <source>
        <dbReference type="SAM" id="MobiDB-lite"/>
    </source>
</evidence>
<evidence type="ECO:0000305" key="2"/>
<protein>
    <recommendedName>
        <fullName>Sperm protamine P1</fullName>
    </recommendedName>
</protein>